<keyword id="KW-1185">Reference proteome</keyword>
<keyword id="KW-0687">Ribonucleoprotein</keyword>
<keyword id="KW-0689">Ribosomal protein</keyword>
<keyword id="KW-0694">RNA-binding</keyword>
<keyword id="KW-0699">rRNA-binding</keyword>
<reference key="1">
    <citation type="journal article" date="2000" name="Nature">
        <title>Genome sequence of the endocellular bacterial symbiont of aphids Buchnera sp. APS.</title>
        <authorList>
            <person name="Shigenobu S."/>
            <person name="Watanabe H."/>
            <person name="Hattori M."/>
            <person name="Sakaki Y."/>
            <person name="Ishikawa H."/>
        </authorList>
    </citation>
    <scope>NUCLEOTIDE SEQUENCE [LARGE SCALE GENOMIC DNA]</scope>
    <source>
        <strain>APS</strain>
    </source>
</reference>
<protein>
    <recommendedName>
        <fullName evidence="1">Small ribosomal subunit protein bS20</fullName>
    </recommendedName>
    <alternativeName>
        <fullName evidence="3">30S ribosomal protein S20</fullName>
    </alternativeName>
</protein>
<sequence>MANIKASKKDALTSEKRRKKNSSRRSMIRTFVKKVRVAIMSGNKTTAEDAFKKMQPIIDSHVNKGLIHKNKAARYKSNLSLQIKKISKI</sequence>
<feature type="chain" id="PRO_0000167934" description="Small ribosomal subunit protein bS20">
    <location>
        <begin position="1"/>
        <end position="89"/>
    </location>
</feature>
<feature type="region of interest" description="Disordered" evidence="2">
    <location>
        <begin position="1"/>
        <end position="26"/>
    </location>
</feature>
<feature type="compositionally biased region" description="Basic residues" evidence="2">
    <location>
        <begin position="16"/>
        <end position="26"/>
    </location>
</feature>
<name>RS20_BUCAI</name>
<comment type="function">
    <text evidence="1">Binds directly to 16S ribosomal RNA.</text>
</comment>
<comment type="similarity">
    <text evidence="1">Belongs to the bacterial ribosomal protein bS20 family.</text>
</comment>
<proteinExistence type="inferred from homology"/>
<dbReference type="EMBL" id="BA000003">
    <property type="protein sequence ID" value="BAB12869.1"/>
    <property type="molecule type" value="Genomic_DNA"/>
</dbReference>
<dbReference type="RefSeq" id="NP_239983.1">
    <property type="nucleotide sequence ID" value="NC_002528.1"/>
</dbReference>
<dbReference type="RefSeq" id="WP_009874107.1">
    <property type="nucleotide sequence ID" value="NZ_AP036055.1"/>
</dbReference>
<dbReference type="SMR" id="P57251"/>
<dbReference type="STRING" id="563178.BUAP5A_149"/>
<dbReference type="EnsemblBacteria" id="BAB12869">
    <property type="protein sequence ID" value="BAB12869"/>
    <property type="gene ID" value="BAB12869"/>
</dbReference>
<dbReference type="KEGG" id="buc:BU151"/>
<dbReference type="PATRIC" id="fig|107806.10.peg.161"/>
<dbReference type="eggNOG" id="COG0268">
    <property type="taxonomic scope" value="Bacteria"/>
</dbReference>
<dbReference type="HOGENOM" id="CLU_160655_4_0_6"/>
<dbReference type="Proteomes" id="UP000001806">
    <property type="component" value="Chromosome"/>
</dbReference>
<dbReference type="GO" id="GO:0005829">
    <property type="term" value="C:cytosol"/>
    <property type="evidence" value="ECO:0007669"/>
    <property type="project" value="TreeGrafter"/>
</dbReference>
<dbReference type="GO" id="GO:0015935">
    <property type="term" value="C:small ribosomal subunit"/>
    <property type="evidence" value="ECO:0007669"/>
    <property type="project" value="TreeGrafter"/>
</dbReference>
<dbReference type="GO" id="GO:0070181">
    <property type="term" value="F:small ribosomal subunit rRNA binding"/>
    <property type="evidence" value="ECO:0007669"/>
    <property type="project" value="TreeGrafter"/>
</dbReference>
<dbReference type="GO" id="GO:0003735">
    <property type="term" value="F:structural constituent of ribosome"/>
    <property type="evidence" value="ECO:0007669"/>
    <property type="project" value="InterPro"/>
</dbReference>
<dbReference type="GO" id="GO:0006412">
    <property type="term" value="P:translation"/>
    <property type="evidence" value="ECO:0007669"/>
    <property type="project" value="UniProtKB-UniRule"/>
</dbReference>
<dbReference type="FunFam" id="1.20.58.110:FF:000001">
    <property type="entry name" value="30S ribosomal protein S20"/>
    <property type="match status" value="1"/>
</dbReference>
<dbReference type="Gene3D" id="1.20.58.110">
    <property type="entry name" value="Ribosomal protein S20"/>
    <property type="match status" value="1"/>
</dbReference>
<dbReference type="HAMAP" id="MF_00500">
    <property type="entry name" value="Ribosomal_bS20"/>
    <property type="match status" value="1"/>
</dbReference>
<dbReference type="InterPro" id="IPR002583">
    <property type="entry name" value="Ribosomal_bS20"/>
</dbReference>
<dbReference type="InterPro" id="IPR036510">
    <property type="entry name" value="Ribosomal_bS20_sf"/>
</dbReference>
<dbReference type="NCBIfam" id="TIGR00029">
    <property type="entry name" value="S20"/>
    <property type="match status" value="1"/>
</dbReference>
<dbReference type="PANTHER" id="PTHR33398">
    <property type="entry name" value="30S RIBOSOMAL PROTEIN S20"/>
    <property type="match status" value="1"/>
</dbReference>
<dbReference type="PANTHER" id="PTHR33398:SF1">
    <property type="entry name" value="SMALL RIBOSOMAL SUBUNIT PROTEIN BS20C"/>
    <property type="match status" value="1"/>
</dbReference>
<dbReference type="Pfam" id="PF01649">
    <property type="entry name" value="Ribosomal_S20p"/>
    <property type="match status" value="1"/>
</dbReference>
<dbReference type="SUPFAM" id="SSF46992">
    <property type="entry name" value="Ribosomal protein S20"/>
    <property type="match status" value="1"/>
</dbReference>
<accession>P57251</accession>
<gene>
    <name evidence="1" type="primary">rpsT</name>
    <name type="ordered locus">BU151</name>
</gene>
<evidence type="ECO:0000255" key="1">
    <source>
        <dbReference type="HAMAP-Rule" id="MF_00500"/>
    </source>
</evidence>
<evidence type="ECO:0000256" key="2">
    <source>
        <dbReference type="SAM" id="MobiDB-lite"/>
    </source>
</evidence>
<evidence type="ECO:0000305" key="3"/>
<organism>
    <name type="scientific">Buchnera aphidicola subsp. Acyrthosiphon pisum (strain APS)</name>
    <name type="common">Acyrthosiphon pisum symbiotic bacterium</name>
    <dbReference type="NCBI Taxonomy" id="107806"/>
    <lineage>
        <taxon>Bacteria</taxon>
        <taxon>Pseudomonadati</taxon>
        <taxon>Pseudomonadota</taxon>
        <taxon>Gammaproteobacteria</taxon>
        <taxon>Enterobacterales</taxon>
        <taxon>Erwiniaceae</taxon>
        <taxon>Buchnera</taxon>
    </lineage>
</organism>